<evidence type="ECO:0000250" key="1"/>
<evidence type="ECO:0000255" key="2"/>
<evidence type="ECO:0000305" key="3"/>
<protein>
    <recommendedName>
        <fullName>Putative lipoprotein LppO</fullName>
    </recommendedName>
</protein>
<comment type="subcellular location">
    <subcellularLocation>
        <location evidence="3">Cell membrane</location>
        <topology evidence="3">Lipid-anchor</topology>
    </subcellularLocation>
</comment>
<gene>
    <name type="primary">lppO</name>
    <name type="ordered locus">Rv2290</name>
    <name type="ORF">MTCY339.20c</name>
</gene>
<reference key="1">
    <citation type="journal article" date="1998" name="Nature">
        <title>Deciphering the biology of Mycobacterium tuberculosis from the complete genome sequence.</title>
        <authorList>
            <person name="Cole S.T."/>
            <person name="Brosch R."/>
            <person name="Parkhill J."/>
            <person name="Garnier T."/>
            <person name="Churcher C.M."/>
            <person name="Harris D.E."/>
            <person name="Gordon S.V."/>
            <person name="Eiglmeier K."/>
            <person name="Gas S."/>
            <person name="Barry C.E. III"/>
            <person name="Tekaia F."/>
            <person name="Badcock K."/>
            <person name="Basham D."/>
            <person name="Brown D."/>
            <person name="Chillingworth T."/>
            <person name="Connor R."/>
            <person name="Davies R.M."/>
            <person name="Devlin K."/>
            <person name="Feltwell T."/>
            <person name="Gentles S."/>
            <person name="Hamlin N."/>
            <person name="Holroyd S."/>
            <person name="Hornsby T."/>
            <person name="Jagels K."/>
            <person name="Krogh A."/>
            <person name="McLean J."/>
            <person name="Moule S."/>
            <person name="Murphy L.D."/>
            <person name="Oliver S."/>
            <person name="Osborne J."/>
            <person name="Quail M.A."/>
            <person name="Rajandream M.A."/>
            <person name="Rogers J."/>
            <person name="Rutter S."/>
            <person name="Seeger K."/>
            <person name="Skelton S."/>
            <person name="Squares S."/>
            <person name="Squares R."/>
            <person name="Sulston J.E."/>
            <person name="Taylor K."/>
            <person name="Whitehead S."/>
            <person name="Barrell B.G."/>
        </authorList>
    </citation>
    <scope>NUCLEOTIDE SEQUENCE [LARGE SCALE GENOMIC DNA]</scope>
    <source>
        <strain>ATCC 25618 / H37Rv</strain>
    </source>
</reference>
<reference key="2">
    <citation type="journal article" date="2011" name="Mol. Cell. Proteomics">
        <title>Proteogenomic analysis of Mycobacterium tuberculosis by high resolution mass spectrometry.</title>
        <authorList>
            <person name="Kelkar D.S."/>
            <person name="Kumar D."/>
            <person name="Kumar P."/>
            <person name="Balakrishnan L."/>
            <person name="Muthusamy B."/>
            <person name="Yadav A.K."/>
            <person name="Shrivastava P."/>
            <person name="Marimuthu A."/>
            <person name="Anand S."/>
            <person name="Sundaram H."/>
            <person name="Kingsbury R."/>
            <person name="Harsha H.C."/>
            <person name="Nair B."/>
            <person name="Prasad T.S."/>
            <person name="Chauhan D.S."/>
            <person name="Katoch K."/>
            <person name="Katoch V.M."/>
            <person name="Kumar P."/>
            <person name="Chaerkady R."/>
            <person name="Ramachandran S."/>
            <person name="Dash D."/>
            <person name="Pandey A."/>
        </authorList>
    </citation>
    <scope>IDENTIFICATION BY MASS SPECTROMETRY [LARGE SCALE ANALYSIS]</scope>
    <source>
        <strain>ATCC 25618 / H37Rv</strain>
    </source>
</reference>
<keyword id="KW-1003">Cell membrane</keyword>
<keyword id="KW-0449">Lipoprotein</keyword>
<keyword id="KW-0472">Membrane</keyword>
<keyword id="KW-0564">Palmitate</keyword>
<keyword id="KW-1185">Reference proteome</keyword>
<keyword id="KW-0732">Signal</keyword>
<organism>
    <name type="scientific">Mycobacterium tuberculosis (strain ATCC 25618 / H37Rv)</name>
    <dbReference type="NCBI Taxonomy" id="83332"/>
    <lineage>
        <taxon>Bacteria</taxon>
        <taxon>Bacillati</taxon>
        <taxon>Actinomycetota</taxon>
        <taxon>Actinomycetes</taxon>
        <taxon>Mycobacteriales</taxon>
        <taxon>Mycobacteriaceae</taxon>
        <taxon>Mycobacterium</taxon>
        <taxon>Mycobacterium tuberculosis complex</taxon>
    </lineage>
</organism>
<sequence length="171" mass="17342">MTDPRHTVRIAVGATALGVSALGATLPACSAHSGPGSPPSAPSAPAAATVMVEGHTHTISGVVECRTSPAVRTATPSESGTQTTRVNAHDDSASVTLSLSDSTPPDVNGFGISLKIGSVDYQMPYQPVQSPTQVEATRQGKSYTLTGTGHAVIPGQTGMRELPFGVHVTCP</sequence>
<dbReference type="EMBL" id="AL123456">
    <property type="protein sequence ID" value="CCP45072.1"/>
    <property type="molecule type" value="Genomic_DNA"/>
</dbReference>
<dbReference type="PIR" id="F70732">
    <property type="entry name" value="F70732"/>
</dbReference>
<dbReference type="RefSeq" id="NP_216806.1">
    <property type="nucleotide sequence ID" value="NC_000962.3"/>
</dbReference>
<dbReference type="RefSeq" id="WP_003900493.1">
    <property type="nucleotide sequence ID" value="NZ_NVQJ01000012.1"/>
</dbReference>
<dbReference type="SMR" id="P9WK71"/>
<dbReference type="STRING" id="83332.Rv2290"/>
<dbReference type="PaxDb" id="83332-Rv2290"/>
<dbReference type="DNASU" id="887203"/>
<dbReference type="GeneID" id="887203"/>
<dbReference type="KEGG" id="mtu:Rv2290"/>
<dbReference type="KEGG" id="mtv:RVBD_2290"/>
<dbReference type="TubercuList" id="Rv2290"/>
<dbReference type="eggNOG" id="ENOG50307CA">
    <property type="taxonomic scope" value="Bacteria"/>
</dbReference>
<dbReference type="InParanoid" id="P9WK71"/>
<dbReference type="OrthoDB" id="4625136at2"/>
<dbReference type="Proteomes" id="UP000001584">
    <property type="component" value="Chromosome"/>
</dbReference>
<dbReference type="GO" id="GO:0005576">
    <property type="term" value="C:extracellular region"/>
    <property type="evidence" value="ECO:0007005"/>
    <property type="project" value="MTBBASE"/>
</dbReference>
<dbReference type="GO" id="GO:0005886">
    <property type="term" value="C:plasma membrane"/>
    <property type="evidence" value="ECO:0007669"/>
    <property type="project" value="UniProtKB-SubCell"/>
</dbReference>
<dbReference type="InterPro" id="IPR008691">
    <property type="entry name" value="LpqH"/>
</dbReference>
<dbReference type="Pfam" id="PF05481">
    <property type="entry name" value="Myco_19_kDa"/>
    <property type="match status" value="1"/>
</dbReference>
<name>LPPO_MYCTU</name>
<accession>P9WK71</accession>
<accession>L0TBV2</accession>
<accession>Q50675</accession>
<feature type="signal peptide" evidence="2">
    <location>
        <begin position="1"/>
        <end position="28"/>
    </location>
</feature>
<feature type="chain" id="PRO_0000018114" description="Putative lipoprotein LppO">
    <location>
        <begin position="29"/>
        <end position="171"/>
    </location>
</feature>
<feature type="lipid moiety-binding region" description="N-palmitoyl cysteine" evidence="1">
    <location>
        <position position="29"/>
    </location>
</feature>
<feature type="lipid moiety-binding region" description="S-diacylglycerol cysteine" evidence="1">
    <location>
        <position position="29"/>
    </location>
</feature>
<proteinExistence type="evidence at protein level"/>